<evidence type="ECO:0000250" key="1">
    <source>
        <dbReference type="UniProtKB" id="O74312"/>
    </source>
</evidence>
<evidence type="ECO:0000250" key="2">
    <source>
        <dbReference type="UniProtKB" id="Q12142"/>
    </source>
</evidence>
<evidence type="ECO:0000255" key="3"/>
<evidence type="ECO:0000256" key="4">
    <source>
        <dbReference type="SAM" id="MobiDB-lite"/>
    </source>
</evidence>
<evidence type="ECO:0000305" key="5"/>
<feature type="chain" id="PRO_0000119836" description="Autophagy-related protein 9">
    <location>
        <begin position="1"/>
        <end position="900"/>
    </location>
</feature>
<feature type="topological domain" description="Cytoplasmic" evidence="5">
    <location>
        <begin position="1"/>
        <end position="213"/>
    </location>
</feature>
<feature type="transmembrane region" description="Helical" evidence="3">
    <location>
        <begin position="214"/>
        <end position="234"/>
    </location>
</feature>
<feature type="topological domain" description="Lumenal" evidence="5">
    <location>
        <begin position="235"/>
        <end position="262"/>
    </location>
</feature>
<feature type="transmembrane region" description="Helical" evidence="3">
    <location>
        <begin position="263"/>
        <end position="283"/>
    </location>
</feature>
<feature type="topological domain" description="Cytoplasmic" evidence="5">
    <location>
        <begin position="284"/>
        <end position="434"/>
    </location>
</feature>
<feature type="intramembrane region" evidence="1">
    <location>
        <begin position="435"/>
        <end position="455"/>
    </location>
</feature>
<feature type="topological domain" description="Cytoplasmic" evidence="5">
    <location>
        <begin position="456"/>
        <end position="524"/>
    </location>
</feature>
<feature type="transmembrane region" description="Helical" evidence="3">
    <location>
        <begin position="525"/>
        <end position="545"/>
    </location>
</feature>
<feature type="topological domain" description="Lumenal" evidence="5">
    <location>
        <begin position="546"/>
        <end position="551"/>
    </location>
</feature>
<feature type="transmembrane region" description="Helical" evidence="3">
    <location>
        <begin position="552"/>
        <end position="572"/>
    </location>
</feature>
<feature type="topological domain" description="Cytoplasmic" evidence="5">
    <location>
        <begin position="573"/>
        <end position="618"/>
    </location>
</feature>
<feature type="intramembrane region" evidence="1">
    <location>
        <begin position="619"/>
        <end position="639"/>
    </location>
</feature>
<feature type="topological domain" description="Cytoplasmic" evidence="5">
    <location>
        <begin position="640"/>
        <end position="900"/>
    </location>
</feature>
<feature type="region of interest" description="Disordered" evidence="4">
    <location>
        <begin position="111"/>
        <end position="134"/>
    </location>
</feature>
<feature type="region of interest" description="Disordered" evidence="4">
    <location>
        <begin position="723"/>
        <end position="873"/>
    </location>
</feature>
<feature type="compositionally biased region" description="Basic and acidic residues" evidence="4">
    <location>
        <begin position="832"/>
        <end position="852"/>
    </location>
</feature>
<feature type="compositionally biased region" description="Polar residues" evidence="4">
    <location>
        <begin position="857"/>
        <end position="870"/>
    </location>
</feature>
<proteinExistence type="inferred from homology"/>
<dbReference type="EMBL" id="BX088700">
    <property type="protein sequence ID" value="CAD60709.1"/>
    <property type="molecule type" value="Genomic_DNA"/>
</dbReference>
<dbReference type="SMR" id="Q875A7"/>
<dbReference type="VEuPathDB" id="FungiDB:PODANS_5_5550"/>
<dbReference type="GO" id="GO:0005776">
    <property type="term" value="C:autophagosome"/>
    <property type="evidence" value="ECO:0007669"/>
    <property type="project" value="TreeGrafter"/>
</dbReference>
<dbReference type="GO" id="GO:0030659">
    <property type="term" value="C:cytoplasmic vesicle membrane"/>
    <property type="evidence" value="ECO:0007669"/>
    <property type="project" value="UniProtKB-SubCell"/>
</dbReference>
<dbReference type="GO" id="GO:0005789">
    <property type="term" value="C:endoplasmic reticulum membrane"/>
    <property type="evidence" value="ECO:0007669"/>
    <property type="project" value="UniProtKB-SubCell"/>
</dbReference>
<dbReference type="GO" id="GO:0000139">
    <property type="term" value="C:Golgi membrane"/>
    <property type="evidence" value="ECO:0007669"/>
    <property type="project" value="UniProtKB-SubCell"/>
</dbReference>
<dbReference type="GO" id="GO:0034045">
    <property type="term" value="C:phagophore assembly site membrane"/>
    <property type="evidence" value="ECO:0007669"/>
    <property type="project" value="UniProtKB-SubCell"/>
</dbReference>
<dbReference type="GO" id="GO:0000422">
    <property type="term" value="P:autophagy of mitochondrion"/>
    <property type="evidence" value="ECO:0007669"/>
    <property type="project" value="TreeGrafter"/>
</dbReference>
<dbReference type="GO" id="GO:0006869">
    <property type="term" value="P:lipid transport"/>
    <property type="evidence" value="ECO:0007669"/>
    <property type="project" value="UniProtKB-KW"/>
</dbReference>
<dbReference type="GO" id="GO:0034727">
    <property type="term" value="P:piecemeal microautophagy of the nucleus"/>
    <property type="evidence" value="ECO:0007669"/>
    <property type="project" value="TreeGrafter"/>
</dbReference>
<dbReference type="GO" id="GO:0034497">
    <property type="term" value="P:protein localization to phagophore assembly site"/>
    <property type="evidence" value="ECO:0007669"/>
    <property type="project" value="TreeGrafter"/>
</dbReference>
<dbReference type="GO" id="GO:0061709">
    <property type="term" value="P:reticulophagy"/>
    <property type="evidence" value="ECO:0007669"/>
    <property type="project" value="TreeGrafter"/>
</dbReference>
<dbReference type="InterPro" id="IPR007241">
    <property type="entry name" value="Autophagy-rel_prot_9"/>
</dbReference>
<dbReference type="PANTHER" id="PTHR13038">
    <property type="entry name" value="APG9 AUTOPHAGY 9"/>
    <property type="match status" value="1"/>
</dbReference>
<dbReference type="PANTHER" id="PTHR13038:SF10">
    <property type="entry name" value="AUTOPHAGY-RELATED PROTEIN 9"/>
    <property type="match status" value="1"/>
</dbReference>
<dbReference type="Pfam" id="PF04109">
    <property type="entry name" value="ATG9"/>
    <property type="match status" value="1"/>
</dbReference>
<accession>Q875A7</accession>
<reference key="1">
    <citation type="journal article" date="2003" name="Fungal Genet. Biol.">
        <title>Characterization of the genomic organization of the region bordering the centromere of chromosome V of Podospora anserina by direct sequencing.</title>
        <authorList>
            <person name="Silar P."/>
            <person name="Barreau C."/>
            <person name="Debuchy R."/>
            <person name="Kicka S."/>
            <person name="Turcq B."/>
            <person name="Sainsard-Chanet A."/>
            <person name="Sellem C.H."/>
            <person name="Billault A."/>
            <person name="Cattolico L."/>
            <person name="Duprat S."/>
            <person name="Weissenbach J."/>
        </authorList>
    </citation>
    <scope>NUCLEOTIDE SEQUENCE [LARGE SCALE GENOMIC DNA]</scope>
    <source>
        <strain>s</strain>
    </source>
</reference>
<comment type="function">
    <text evidence="2">Phospholipid scramblase involved in autophagy and cytoplasm to vacuole transport (Cvt) vesicle formation. Cycles between the preautophagosomal structure/phagophore assembly site (PAS) and the cytoplasmic vesicle pool and supplies membrane for the growing autophagosome. Lipid scramblase activity plays a key role in preautophagosomal structure/phagophore assembly by distributing the phospholipids that arrive through ATG2 from the cytoplasmic to the luminal leaflet of the bilayer, thereby driving autophagosomal membrane expansion. Required for mitophagy. Also involved in endoplasmic reticulum-specific autophagic process and is essential for the survival of cells subjected to severe ER stress. Different machineries are required for anterograde trafficking to the PAS during either the Cvt pathway or bulk autophagy and for retrograde trafficking.</text>
</comment>
<comment type="catalytic activity">
    <reaction evidence="2">
        <text>a 1,2-diacyl-sn-glycero-3-phosphocholine(in) = a 1,2-diacyl-sn-glycero-3-phosphocholine(out)</text>
        <dbReference type="Rhea" id="RHEA:38571"/>
        <dbReference type="ChEBI" id="CHEBI:57643"/>
    </reaction>
</comment>
<comment type="catalytic activity">
    <reaction evidence="2">
        <text>a 1,2-diacyl-sn-glycero-3-phospho-L-serine(in) = a 1,2-diacyl-sn-glycero-3-phospho-L-serine(out)</text>
        <dbReference type="Rhea" id="RHEA:38663"/>
        <dbReference type="ChEBI" id="CHEBI:57262"/>
    </reaction>
</comment>
<comment type="catalytic activity">
    <reaction evidence="2">
        <text>a 1,2-diacyl-sn-glycero-3-phosphoethanolamine(in) = a 1,2-diacyl-sn-glycero-3-phosphoethanolamine(out)</text>
        <dbReference type="Rhea" id="RHEA:38895"/>
        <dbReference type="ChEBI" id="CHEBI:64612"/>
    </reaction>
</comment>
<comment type="catalytic activity">
    <reaction evidence="2">
        <text>a 1,2-diacyl-sn-glycero-3-phospho-(1D-myo-inositol-3-phosphate)(in) = a 1,2-diacyl-sn-glycero-3-phospho-(1D-myo-inositol-3-phosphate)(out)</text>
        <dbReference type="Rhea" id="RHEA:67920"/>
        <dbReference type="ChEBI" id="CHEBI:58088"/>
    </reaction>
</comment>
<comment type="subunit">
    <text evidence="1">Homotrimer; forms a homotrimer with a central pore that forms a path between the two membrane leaflets.</text>
</comment>
<comment type="subcellular location">
    <subcellularLocation>
        <location evidence="2">Preautophagosomal structure membrane</location>
        <topology evidence="2">Multi-pass membrane protein</topology>
    </subcellularLocation>
    <subcellularLocation>
        <location evidence="2">Cytoplasmic vesicle membrane</location>
        <topology evidence="2">Multi-pass membrane protein</topology>
    </subcellularLocation>
    <subcellularLocation>
        <location evidence="2">Golgi apparatus membrane</location>
        <topology evidence="2">Multi-pass membrane protein</topology>
    </subcellularLocation>
    <subcellularLocation>
        <location evidence="2">Endoplasmic reticulum membrane</location>
        <topology evidence="2">Multi-pass membrane protein</topology>
    </subcellularLocation>
</comment>
<comment type="domain">
    <text evidence="1">Forms a homotrimer with a solvated central pore, which is connected laterally to the cytosol through the cavity within each protomer. Acts as a lipid scramblase that uses its central pore to function: the central pore opens laterally to accommodate lipid headgroups, thereby enabling lipid flipping and redistribution of lipids added to the outer leaflet of ATG9-containing vesicles, thereby enabling growth into autophagosomes.</text>
</comment>
<comment type="PTM">
    <text evidence="2">Phosphorylated by ATG1. ATG1 phosphorylation is required for preautophagosome elongation.</text>
</comment>
<comment type="similarity">
    <text evidence="5">Belongs to the ATG9 family.</text>
</comment>
<sequence length="900" mass="102673">MPRKLFSKMPTTQGRSFYEELRGHDSEGYDGGSRAGLLDEENLNHNFQDYDLDHAEGLTVDDSRATLAGLRKTPASKVPPGHQNDRSMWLAHDDDADNDVPPSLLVEPRGAHLAGKPKRKQSRQAAYTMPGSSNTRAQWETIQAHQPLHNDEPFTQSHRGNGAPGSLFSGSASLDAKKMAEWRWANVQNLDKFIKEVYDYYRGCGIKAIITERVLHLGNVAFIAVLLTFLTQCVDYSLVRGSQKLSQIIVPQCTRKMSGWWNLGLWLFAFYFIWKAIQYILDLHRLFHVRDFYTHLLNIPDHDMQTITWQEVVARVMALRNQNSKTATTLTPLQRHFIGSQSKERLDASDIANRIMRRENYLIALFNKDILDLTIPLPFLRNRQYFSRTLEWTLMFSVLDMVFDEKGQVNQKFLRADRRGEISEKLRSRFQFAGIMILVLSPFVSLYLVIYYFLMYYHEIQKNPSVLSSRSYTPLAEWKFREFNELPHLFQKRLDMSKAFATHYMDQFPKVKTEMVAKSVAFVSGALATVLAIASVFDPELFLGFEITPDRTVLFYTAIFGSIWAVAHGMQSQDDVVFDPEYAMRNVIEYTHYEPDHWKDRLHSYDIKLEFAELYKPKIVIFLEEILGILTTPFVLFFSLPKCSDQIIDFFREFTLHIDGLGYVCTFAEFDFKKAMANAKKPSDGGDVRDEYYSAKHGKMEASYYGFIGNYGNFALNPKGAPGSHLPPGMRNQFHPPPAWPGLNSPPLGADMQTSRMGRSEFRSRSRAPGQGLRPGPSMVAPSPMASILLDPHHLPPSHLVNPGRASHPHRVQQNRRPGESNIIEESLEDEERGREGVNRHDDEEVYGHGDGMDESAWQTSPARTLSRDNSAIEGTGTAEAGVVDMIYQFNQAQFTRNGV</sequence>
<protein>
    <recommendedName>
        <fullName>Autophagy-related protein 9</fullName>
    </recommendedName>
</protein>
<gene>
    <name type="primary">ATG9</name>
    <name type="ORF">Pa5D0022</name>
</gene>
<name>ATG9_PODAS</name>
<organism>
    <name type="scientific">Podospora anserina</name>
    <name type="common">Pleurage anserina</name>
    <dbReference type="NCBI Taxonomy" id="2587412"/>
    <lineage>
        <taxon>Eukaryota</taxon>
        <taxon>Fungi</taxon>
        <taxon>Dikarya</taxon>
        <taxon>Ascomycota</taxon>
        <taxon>Pezizomycotina</taxon>
        <taxon>Sordariomycetes</taxon>
        <taxon>Sordariomycetidae</taxon>
        <taxon>Sordariales</taxon>
        <taxon>Podosporaceae</taxon>
        <taxon>Podospora</taxon>
    </lineage>
</organism>
<keyword id="KW-0072">Autophagy</keyword>
<keyword id="KW-0968">Cytoplasmic vesicle</keyword>
<keyword id="KW-0256">Endoplasmic reticulum</keyword>
<keyword id="KW-0333">Golgi apparatus</keyword>
<keyword id="KW-0445">Lipid transport</keyword>
<keyword id="KW-0472">Membrane</keyword>
<keyword id="KW-0597">Phosphoprotein</keyword>
<keyword id="KW-0812">Transmembrane</keyword>
<keyword id="KW-1133">Transmembrane helix</keyword>
<keyword id="KW-0813">Transport</keyword>